<protein>
    <recommendedName>
        <fullName>Beta-2 adrenergic receptor</fullName>
    </recommendedName>
    <alternativeName>
        <fullName>Beta-2 adrenoreceptor</fullName>
        <shortName>Beta-2 adrenoceptor</shortName>
    </alternativeName>
</protein>
<dbReference type="EMBL" id="AJ459814">
    <property type="protein sequence ID" value="CAD30869.1"/>
    <property type="molecule type" value="Genomic_DNA"/>
</dbReference>
<dbReference type="RefSeq" id="XP_003477383.1">
    <property type="nucleotide sequence ID" value="XM_003477335.5"/>
</dbReference>
<dbReference type="SMR" id="Q8K4Z4"/>
<dbReference type="FunCoup" id="Q8K4Z4">
    <property type="interactions" value="1213"/>
</dbReference>
<dbReference type="STRING" id="10141.ENSCPOP00000018242"/>
<dbReference type="BindingDB" id="Q8K4Z4"/>
<dbReference type="ChEMBL" id="CHEMBL5414"/>
<dbReference type="DrugCentral" id="Q8K4Z4"/>
<dbReference type="GlyCosmos" id="Q8K4Z4">
    <property type="glycosylation" value="3 sites, No reported glycans"/>
</dbReference>
<dbReference type="Ensembl" id="ENSCPOT00000012875.3">
    <property type="protein sequence ID" value="ENSCPOP00000018242.1"/>
    <property type="gene ID" value="ENSCPOG00000012753.4"/>
</dbReference>
<dbReference type="GeneID" id="100722663"/>
<dbReference type="KEGG" id="cpoc:100722663"/>
<dbReference type="CTD" id="154"/>
<dbReference type="VEuPathDB" id="HostDB:ENSCPOG00000012753"/>
<dbReference type="eggNOG" id="KOG3656">
    <property type="taxonomic scope" value="Eukaryota"/>
</dbReference>
<dbReference type="GeneTree" id="ENSGT00940000159538"/>
<dbReference type="HOGENOM" id="CLU_009579_11_0_1"/>
<dbReference type="InParanoid" id="Q8K4Z4"/>
<dbReference type="OMA" id="CEFWISI"/>
<dbReference type="OrthoDB" id="5975661at2759"/>
<dbReference type="TreeFam" id="TF316350"/>
<dbReference type="PRO" id="PR:Q8K4Z4"/>
<dbReference type="Proteomes" id="UP000005447">
    <property type="component" value="Unassembled WGS sequence"/>
</dbReference>
<dbReference type="Bgee" id="ENSCPOG00000012753">
    <property type="expression patterns" value="Expressed in liver and 12 other cell types or tissues"/>
</dbReference>
<dbReference type="GO" id="GO:0016324">
    <property type="term" value="C:apical plasma membrane"/>
    <property type="evidence" value="ECO:0007669"/>
    <property type="project" value="Ensembl"/>
</dbReference>
<dbReference type="GO" id="GO:0036064">
    <property type="term" value="C:ciliary basal body"/>
    <property type="evidence" value="ECO:0007669"/>
    <property type="project" value="Ensembl"/>
</dbReference>
<dbReference type="GO" id="GO:0005769">
    <property type="term" value="C:early endosome"/>
    <property type="evidence" value="ECO:0007669"/>
    <property type="project" value="UniProtKB-SubCell"/>
</dbReference>
<dbReference type="GO" id="GO:0005794">
    <property type="term" value="C:Golgi apparatus"/>
    <property type="evidence" value="ECO:0007669"/>
    <property type="project" value="UniProtKB-SubCell"/>
</dbReference>
<dbReference type="GO" id="GO:0045171">
    <property type="term" value="C:intercellular bridge"/>
    <property type="evidence" value="ECO:0007669"/>
    <property type="project" value="Ensembl"/>
</dbReference>
<dbReference type="GO" id="GO:0072686">
    <property type="term" value="C:mitotic spindle"/>
    <property type="evidence" value="ECO:0007669"/>
    <property type="project" value="Ensembl"/>
</dbReference>
<dbReference type="GO" id="GO:0098992">
    <property type="term" value="C:neuronal dense core vesicle"/>
    <property type="evidence" value="ECO:0007669"/>
    <property type="project" value="Ensembl"/>
</dbReference>
<dbReference type="GO" id="GO:0005634">
    <property type="term" value="C:nucleus"/>
    <property type="evidence" value="ECO:0007669"/>
    <property type="project" value="Ensembl"/>
</dbReference>
<dbReference type="GO" id="GO:0043235">
    <property type="term" value="C:receptor complex"/>
    <property type="evidence" value="ECO:0000250"/>
    <property type="project" value="HGNC-UCL"/>
</dbReference>
<dbReference type="GO" id="GO:0008179">
    <property type="term" value="F:adenylate cyclase binding"/>
    <property type="evidence" value="ECO:0007669"/>
    <property type="project" value="Ensembl"/>
</dbReference>
<dbReference type="GO" id="GO:0001540">
    <property type="term" value="F:amyloid-beta binding"/>
    <property type="evidence" value="ECO:0007669"/>
    <property type="project" value="Ensembl"/>
</dbReference>
<dbReference type="GO" id="GO:0004941">
    <property type="term" value="F:beta2-adrenergic receptor activity"/>
    <property type="evidence" value="ECO:0000250"/>
    <property type="project" value="HGNC-UCL"/>
</dbReference>
<dbReference type="GO" id="GO:0051380">
    <property type="term" value="F:norepinephrine binding"/>
    <property type="evidence" value="ECO:0000250"/>
    <property type="project" value="HGNC-UCL"/>
</dbReference>
<dbReference type="GO" id="GO:0015459">
    <property type="term" value="F:potassium channel regulator activity"/>
    <property type="evidence" value="ECO:0007669"/>
    <property type="project" value="Ensembl"/>
</dbReference>
<dbReference type="GO" id="GO:0042803">
    <property type="term" value="F:protein homodimerization activity"/>
    <property type="evidence" value="ECO:0000250"/>
    <property type="project" value="HGNC-UCL"/>
</dbReference>
<dbReference type="GO" id="GO:0044877">
    <property type="term" value="F:protein-containing complex binding"/>
    <property type="evidence" value="ECO:0007669"/>
    <property type="project" value="Ensembl"/>
</dbReference>
<dbReference type="GO" id="GO:0071880">
    <property type="term" value="P:adenylate cyclase-activating adrenergic receptor signaling pathway"/>
    <property type="evidence" value="ECO:0000250"/>
    <property type="project" value="HGNC-UCL"/>
</dbReference>
<dbReference type="GO" id="GO:0098990">
    <property type="term" value="P:AMPA selective glutamate receptor signaling pathway"/>
    <property type="evidence" value="ECO:0007669"/>
    <property type="project" value="Ensembl"/>
</dbReference>
<dbReference type="GO" id="GO:0045453">
    <property type="term" value="P:bone resorption"/>
    <property type="evidence" value="ECO:0007669"/>
    <property type="project" value="Ensembl"/>
</dbReference>
<dbReference type="GO" id="GO:0050873">
    <property type="term" value="P:brown fat cell differentiation"/>
    <property type="evidence" value="ECO:0007669"/>
    <property type="project" value="Ensembl"/>
</dbReference>
<dbReference type="GO" id="GO:1904646">
    <property type="term" value="P:cellular response to amyloid-beta"/>
    <property type="evidence" value="ECO:0007669"/>
    <property type="project" value="Ensembl"/>
</dbReference>
<dbReference type="GO" id="GO:0002024">
    <property type="term" value="P:diet induced thermogenesis"/>
    <property type="evidence" value="ECO:0007669"/>
    <property type="project" value="Ensembl"/>
</dbReference>
<dbReference type="GO" id="GO:0031649">
    <property type="term" value="P:heat generation"/>
    <property type="evidence" value="ECO:0007669"/>
    <property type="project" value="Ensembl"/>
</dbReference>
<dbReference type="GO" id="GO:0045744">
    <property type="term" value="P:negative regulation of G protein-coupled receptor signaling pathway"/>
    <property type="evidence" value="ECO:0000250"/>
    <property type="project" value="HGNC-UCL"/>
</dbReference>
<dbReference type="GO" id="GO:0040015">
    <property type="term" value="P:negative regulation of multicellular organism growth"/>
    <property type="evidence" value="ECO:0007669"/>
    <property type="project" value="Ensembl"/>
</dbReference>
<dbReference type="GO" id="GO:0045986">
    <property type="term" value="P:negative regulation of smooth muscle contraction"/>
    <property type="evidence" value="ECO:0007669"/>
    <property type="project" value="Ensembl"/>
</dbReference>
<dbReference type="GO" id="GO:0002025">
    <property type="term" value="P:norepinephrine-epinephrine-mediated vasodilation involved in regulation of systemic arterial blood pressure"/>
    <property type="evidence" value="ECO:0007669"/>
    <property type="project" value="Ensembl"/>
</dbReference>
<dbReference type="GO" id="GO:1901098">
    <property type="term" value="P:positive regulation of autophagosome maturation"/>
    <property type="evidence" value="ECO:0000250"/>
    <property type="project" value="GO_Central"/>
</dbReference>
<dbReference type="GO" id="GO:0030501">
    <property type="term" value="P:positive regulation of bone mineralization"/>
    <property type="evidence" value="ECO:0007669"/>
    <property type="project" value="Ensembl"/>
</dbReference>
<dbReference type="GO" id="GO:0141163">
    <property type="term" value="P:positive regulation of cAMP/PKA signal transduction"/>
    <property type="evidence" value="ECO:0007669"/>
    <property type="project" value="Ensembl"/>
</dbReference>
<dbReference type="GO" id="GO:0120162">
    <property type="term" value="P:positive regulation of cold-induced thermogenesis"/>
    <property type="evidence" value="ECO:0007669"/>
    <property type="project" value="Ensembl"/>
</dbReference>
<dbReference type="GO" id="GO:1904504">
    <property type="term" value="P:positive regulation of lipophagy"/>
    <property type="evidence" value="ECO:0000250"/>
    <property type="project" value="GO_Central"/>
</dbReference>
<dbReference type="GO" id="GO:0043410">
    <property type="term" value="P:positive regulation of MAPK cascade"/>
    <property type="evidence" value="ECO:0000250"/>
    <property type="project" value="HGNC-UCL"/>
</dbReference>
<dbReference type="GO" id="GO:0061885">
    <property type="term" value="P:positive regulation of mini excitatory postsynaptic potential"/>
    <property type="evidence" value="ECO:0007669"/>
    <property type="project" value="Ensembl"/>
</dbReference>
<dbReference type="GO" id="GO:0045944">
    <property type="term" value="P:positive regulation of transcription by RNA polymerase II"/>
    <property type="evidence" value="ECO:0007669"/>
    <property type="project" value="Ensembl"/>
</dbReference>
<dbReference type="GO" id="GO:0006898">
    <property type="term" value="P:receptor-mediated endocytosis"/>
    <property type="evidence" value="ECO:0000250"/>
    <property type="project" value="HGNC-UCL"/>
</dbReference>
<dbReference type="GO" id="GO:0002028">
    <property type="term" value="P:regulation of sodium ion transport"/>
    <property type="evidence" value="ECO:0007669"/>
    <property type="project" value="Ensembl"/>
</dbReference>
<dbReference type="GO" id="GO:0009409">
    <property type="term" value="P:response to cold"/>
    <property type="evidence" value="ECO:0007669"/>
    <property type="project" value="Ensembl"/>
</dbReference>
<dbReference type="GO" id="GO:0006939">
    <property type="term" value="P:smooth muscle contraction"/>
    <property type="evidence" value="ECO:0007669"/>
    <property type="project" value="Ensembl"/>
</dbReference>
<dbReference type="GO" id="GO:0006366">
    <property type="term" value="P:transcription by RNA polymerase II"/>
    <property type="evidence" value="ECO:0007669"/>
    <property type="project" value="Ensembl"/>
</dbReference>
<dbReference type="CDD" id="cd15957">
    <property type="entry name" value="7tmA_Beta2_AR"/>
    <property type="match status" value="1"/>
</dbReference>
<dbReference type="FunFam" id="1.20.1070.10:FF:000057">
    <property type="entry name" value="Beta-1 adrenergic receptor"/>
    <property type="match status" value="1"/>
</dbReference>
<dbReference type="Gene3D" id="1.20.1070.10">
    <property type="entry name" value="Rhodopsin 7-helix transmembrane proteins"/>
    <property type="match status" value="1"/>
</dbReference>
<dbReference type="InterPro" id="IPR002233">
    <property type="entry name" value="ADR_fam"/>
</dbReference>
<dbReference type="InterPro" id="IPR000332">
    <property type="entry name" value="ADRB2_rcpt"/>
</dbReference>
<dbReference type="InterPro" id="IPR000276">
    <property type="entry name" value="GPCR_Rhodpsn"/>
</dbReference>
<dbReference type="InterPro" id="IPR017452">
    <property type="entry name" value="GPCR_Rhodpsn_7TM"/>
</dbReference>
<dbReference type="PANTHER" id="PTHR24248">
    <property type="entry name" value="ADRENERGIC RECEPTOR-RELATED G-PROTEIN COUPLED RECEPTOR"/>
    <property type="match status" value="1"/>
</dbReference>
<dbReference type="PANTHER" id="PTHR24248:SF21">
    <property type="entry name" value="BETA-2 ADRENERGIC RECEPTOR"/>
    <property type="match status" value="1"/>
</dbReference>
<dbReference type="Pfam" id="PF00001">
    <property type="entry name" value="7tm_1"/>
    <property type="match status" value="1"/>
</dbReference>
<dbReference type="PRINTS" id="PR01103">
    <property type="entry name" value="ADRENERGICR"/>
</dbReference>
<dbReference type="PRINTS" id="PR00562">
    <property type="entry name" value="ADRENRGCB2AR"/>
</dbReference>
<dbReference type="PRINTS" id="PR00237">
    <property type="entry name" value="GPCRRHODOPSN"/>
</dbReference>
<dbReference type="SMART" id="SM01381">
    <property type="entry name" value="7TM_GPCR_Srsx"/>
    <property type="match status" value="1"/>
</dbReference>
<dbReference type="SUPFAM" id="SSF81321">
    <property type="entry name" value="Family A G protein-coupled receptor-like"/>
    <property type="match status" value="1"/>
</dbReference>
<dbReference type="PROSITE" id="PS00237">
    <property type="entry name" value="G_PROTEIN_RECEP_F1_1"/>
    <property type="match status" value="1"/>
</dbReference>
<dbReference type="PROSITE" id="PS50262">
    <property type="entry name" value="G_PROTEIN_RECEP_F1_2"/>
    <property type="match status" value="1"/>
</dbReference>
<feature type="chain" id="PRO_0000305175" description="Beta-2 adrenergic receptor">
    <location>
        <begin position="1"/>
        <end position="418"/>
    </location>
</feature>
<feature type="topological domain" description="Extracellular" evidence="1">
    <location>
        <begin position="1"/>
        <end position="37"/>
    </location>
</feature>
<feature type="transmembrane region" description="Helical; Name=1" evidence="1">
    <location>
        <begin position="38"/>
        <end position="58"/>
    </location>
</feature>
<feature type="topological domain" description="Cytoplasmic" evidence="1">
    <location>
        <begin position="59"/>
        <end position="70"/>
    </location>
</feature>
<feature type="transmembrane region" description="Helical; Name=2" evidence="1">
    <location>
        <begin position="71"/>
        <end position="91"/>
    </location>
</feature>
<feature type="topological domain" description="Extracellular" evidence="1">
    <location>
        <begin position="92"/>
        <end position="107"/>
    </location>
</feature>
<feature type="transmembrane region" description="Helical; Name=3" evidence="1">
    <location>
        <begin position="108"/>
        <end position="128"/>
    </location>
</feature>
<feature type="topological domain" description="Cytoplasmic" evidence="1">
    <location>
        <begin position="129"/>
        <end position="151"/>
    </location>
</feature>
<feature type="transmembrane region" description="Helical; Name=4" evidence="1">
    <location>
        <begin position="152"/>
        <end position="172"/>
    </location>
</feature>
<feature type="topological domain" description="Extracellular" evidence="1">
    <location>
        <begin position="173"/>
        <end position="197"/>
    </location>
</feature>
<feature type="transmembrane region" description="Helical; Name=5" evidence="1">
    <location>
        <begin position="198"/>
        <end position="218"/>
    </location>
</feature>
<feature type="topological domain" description="Cytoplasmic" evidence="1">
    <location>
        <begin position="219"/>
        <end position="274"/>
    </location>
</feature>
<feature type="transmembrane region" description="Helical; Name=6" evidence="1">
    <location>
        <begin position="275"/>
        <end position="295"/>
    </location>
</feature>
<feature type="topological domain" description="Extracellular" evidence="1">
    <location>
        <begin position="296"/>
        <end position="306"/>
    </location>
</feature>
<feature type="transmembrane region" description="Helical; Name=7" evidence="1">
    <location>
        <begin position="307"/>
        <end position="327"/>
    </location>
</feature>
<feature type="topological domain" description="Cytoplasmic" evidence="1">
    <location>
        <begin position="328"/>
        <end position="418"/>
    </location>
</feature>
<feature type="region of interest" description="Disordered" evidence="5">
    <location>
        <begin position="389"/>
        <end position="418"/>
    </location>
</feature>
<feature type="short sequence motif" description="PDZ-binding">
    <location>
        <begin position="415"/>
        <end position="418"/>
    </location>
</feature>
<feature type="compositionally biased region" description="Polar residues" evidence="5">
    <location>
        <begin position="400"/>
        <end position="418"/>
    </location>
</feature>
<feature type="modified residue" description="Phosphotyrosine" evidence="2">
    <location>
        <position position="141"/>
    </location>
</feature>
<feature type="modified residue" description="Phosphoserine" evidence="2">
    <location>
        <position position="246"/>
    </location>
</feature>
<feature type="modified residue" description="Phosphoserine; by PKA" evidence="3">
    <location>
        <position position="261"/>
    </location>
</feature>
<feature type="modified residue" description="Phosphoserine; by PKA" evidence="3">
    <location>
        <position position="262"/>
    </location>
</feature>
<feature type="modified residue" description="Phosphoserine; by PKA" evidence="2">
    <location>
        <position position="345"/>
    </location>
</feature>
<feature type="modified residue" description="Phosphoserine; by BARK" evidence="1">
    <location>
        <position position="355"/>
    </location>
</feature>
<feature type="modified residue" description="Phosphoserine; by BARK" evidence="1">
    <location>
        <position position="356"/>
    </location>
</feature>
<feature type="modified residue" description="4-hydroxyproline" evidence="1">
    <location>
        <position position="387"/>
    </location>
</feature>
<feature type="modified residue" description="4-hydroxyproline" evidence="1">
    <location>
        <position position="400"/>
    </location>
</feature>
<feature type="lipid moiety-binding region" description="S-palmitoyl cysteine" evidence="2">
    <location>
        <position position="341"/>
    </location>
</feature>
<feature type="glycosylation site" description="N-linked (GlcNAc...) asparagine" evidence="3">
    <location>
        <position position="6"/>
    </location>
</feature>
<feature type="glycosylation site" description="N-linked (GlcNAc...) asparagine" evidence="3">
    <location>
        <position position="15"/>
    </location>
</feature>
<feature type="glycosylation site" description="N-linked (GlcNAc...) asparagine" evidence="3">
    <location>
        <position position="23"/>
    </location>
</feature>
<feature type="disulfide bond" evidence="4">
    <location>
        <begin position="106"/>
        <end position="191"/>
    </location>
</feature>
<feature type="disulfide bond" evidence="4">
    <location>
        <begin position="184"/>
        <end position="190"/>
    </location>
</feature>
<reference key="1">
    <citation type="journal article" date="2002" name="Eur. J. Pharmacol.">
        <title>Cloning, pharmacological characterization, and polymorphism screening of the guinea pig beta(2)-adrenoceptor.</title>
        <authorList>
            <person name="Oostendorp J."/>
            <person name="Meurs H."/>
            <person name="Nelemans S.A."/>
            <person name="Zaagsma J."/>
            <person name="Kauffman H.F."/>
            <person name="Postma D.S."/>
            <person name="Boddeke H.W.G.M."/>
            <person name="Biber K."/>
        </authorList>
    </citation>
    <scope>NUCLEOTIDE SEQUENCE [GENOMIC DNA]</scope>
    <scope>FUNCTION</scope>
    <scope>SUBCELLULAR LOCATION</scope>
    <source>
        <strain>Dunkin-Hartley</strain>
    </source>
</reference>
<gene>
    <name type="primary">Adrb2</name>
</gene>
<evidence type="ECO:0000250" key="1"/>
<evidence type="ECO:0000250" key="2">
    <source>
        <dbReference type="UniProtKB" id="P07550"/>
    </source>
</evidence>
<evidence type="ECO:0000255" key="3"/>
<evidence type="ECO:0000255" key="4">
    <source>
        <dbReference type="PROSITE-ProRule" id="PRU00521"/>
    </source>
</evidence>
<evidence type="ECO:0000256" key="5">
    <source>
        <dbReference type="SAM" id="MobiDB-lite"/>
    </source>
</evidence>
<evidence type="ECO:0000269" key="6">
    <source>
    </source>
</evidence>
<proteinExistence type="inferred from homology"/>
<sequence length="418" mass="46991">MGHLGNGSDFLLAPNASHAPDHNVTRERDEAWVVGMAIVMSLIVLAIVFGNVLVITAIAKFERLQTVTNYFITSLACADLVMGLAVVPFGASHILMNMWTFGNFWCEFWTSIDVLCVTASIETLCVIAVDRYFAITSPFKYQSLLTKNKARVVILMVWVVSGLTSFLPIQMHWYRATHKDAINCYAEETCCDFFTNQAYAIASSIVSFYLPLVVMVFVYSRVFQVAKKQLQKIDRSEGRFHTQNLSQVEQDGRSGHGLRRSSKFYLKEHKALKTLGIIMGTFTLCWLPFFIVNIVHVIQDNLIPKEVYILLNWVGYVNSAFNPLIYCRSPDFRIAFQELLCLRRSALKAYGNDCSSNSNGKTDYTGEPNVCHQGQEKERELLCEDPPGTEDLVSCPGTVPSDSIDSQGRNYSTNDSLL</sequence>
<comment type="function">
    <text evidence="6">Beta-adrenergic receptors mediate the catecholamine-induced activation of adenylate cyclase through the action of G proteins.</text>
</comment>
<comment type="subunit">
    <text evidence="2">Binds NHERF1 and GPRASP1. Interacts with ARRB1 and ARRB2. Interacts with SRC (By similarity). Interacts with USP20 and USP33 (By similarity). Interacts with VHL; the interaction, which is increased on hydroxylation of ADRB2, ubiquitinates ADRB2 leading to its degradation. Interacts with EGLN3; the interaction hydroxylates ADRB2 facilitating VHL-E3 ligase-mediated ubiquitination. Interacts (via PDZ-binding motif) with SNX27 (via PDZ domain); the interaction is required when endocytosed to prevent degradation in lysosomes and promote recycling to the plasma membrane. Interacts with CNIH4. Interacts with ARRDC3. Interacts with NEDD4 (By similarity). Interacts with MARCHF2 (By similarity).</text>
</comment>
<comment type="subcellular location">
    <subcellularLocation>
        <location evidence="6">Cell membrane</location>
        <topology evidence="2">Multi-pass membrane protein</topology>
    </subcellularLocation>
    <subcellularLocation>
        <location evidence="2">Early endosome</location>
    </subcellularLocation>
    <subcellularLocation>
        <location evidence="2">Golgi apparatus</location>
    </subcellularLocation>
    <text evidence="2">Colocalizes with VHL at the cell membrane. Activated receptors are internalized into endosomes prior to their degradation in lysosomes. Activated receptors are also detected within the Golgi apparatus.</text>
</comment>
<comment type="PTM">
    <text>Phosphorylated by PKA and BARK upon agonist stimulation, which mediates homologous desensitization of the receptor. PKA-mediated phosphorylation seems to facilitate phosphorylation by BARK.</text>
</comment>
<comment type="PTM">
    <text evidence="1">Phosphorylation of Tyr-141 is induced by insulin and leads to supersensitization of the receptor.</text>
</comment>
<comment type="PTM">
    <text evidence="1">Polyubiquitinated. Agonist-induced ubiquitination leads to sort internalized receptors to the lysosomes for degradation. Deubiquitination by USP20 and USP33, leads to ADRB2 recycling and resensitization after prolonged agonist stimulation. USP20 and USP33 are constitutively associated and are dissociated immediately after agonist stimulation. Ubiquitination by the VHL-E3 ligase complex is oxygen-dependent (By similarity).</text>
</comment>
<comment type="PTM">
    <text evidence="1">Hydroxylation by EGLN3 occurs only under normoxia and increases the interaction with VHL and the subsequent ubiquitination and degradation of ADRB2.</text>
</comment>
<comment type="PTM">
    <text evidence="2">Palmitoylated. Mainly palmitoylated at Cys-341. Palmitoylation may reduce accessibility of phosphorylation sites by anchoring the receptor to the plasma membrane. Agonist stimulation promotes depalmitoylation and further allows phosphorylation. Could be depalmitoylated by LYPLA1 at the plasma membrane.</text>
</comment>
<comment type="similarity">
    <text evidence="4">Belongs to the G-protein coupled receptor 1 family. Adrenergic receptor subfamily. ADRB2 sub-subfamily.</text>
</comment>
<accession>Q8K4Z4</accession>
<name>ADRB2_CAVPO</name>
<keyword id="KW-1003">Cell membrane</keyword>
<keyword id="KW-1015">Disulfide bond</keyword>
<keyword id="KW-0967">Endosome</keyword>
<keyword id="KW-0297">G-protein coupled receptor</keyword>
<keyword id="KW-0325">Glycoprotein</keyword>
<keyword id="KW-0333">Golgi apparatus</keyword>
<keyword id="KW-0379">Hydroxylation</keyword>
<keyword id="KW-0449">Lipoprotein</keyword>
<keyword id="KW-0472">Membrane</keyword>
<keyword id="KW-0564">Palmitate</keyword>
<keyword id="KW-0597">Phosphoprotein</keyword>
<keyword id="KW-0675">Receptor</keyword>
<keyword id="KW-1185">Reference proteome</keyword>
<keyword id="KW-0807">Transducer</keyword>
<keyword id="KW-0812">Transmembrane</keyword>
<keyword id="KW-1133">Transmembrane helix</keyword>
<keyword id="KW-0832">Ubl conjugation</keyword>
<organism>
    <name type="scientific">Cavia porcellus</name>
    <name type="common">Guinea pig</name>
    <dbReference type="NCBI Taxonomy" id="10141"/>
    <lineage>
        <taxon>Eukaryota</taxon>
        <taxon>Metazoa</taxon>
        <taxon>Chordata</taxon>
        <taxon>Craniata</taxon>
        <taxon>Vertebrata</taxon>
        <taxon>Euteleostomi</taxon>
        <taxon>Mammalia</taxon>
        <taxon>Eutheria</taxon>
        <taxon>Euarchontoglires</taxon>
        <taxon>Glires</taxon>
        <taxon>Rodentia</taxon>
        <taxon>Hystricomorpha</taxon>
        <taxon>Caviidae</taxon>
        <taxon>Cavia</taxon>
    </lineage>
</organism>